<name>PANE_PYRAE</name>
<comment type="function">
    <text evidence="2">Catalyzes the NAD(P)H-dependent reduction of ketopantoate into pantoic acid.</text>
</comment>
<comment type="catalytic activity">
    <reaction evidence="2">
        <text>(R)-pantoate + NAD(+) = 2-dehydropantoate + NADH + H(+)</text>
        <dbReference type="Rhea" id="RHEA:61292"/>
        <dbReference type="ChEBI" id="CHEBI:11561"/>
        <dbReference type="ChEBI" id="CHEBI:15378"/>
        <dbReference type="ChEBI" id="CHEBI:15980"/>
        <dbReference type="ChEBI" id="CHEBI:57540"/>
        <dbReference type="ChEBI" id="CHEBI:57945"/>
    </reaction>
    <physiologicalReaction direction="right-to-left" evidence="2">
        <dbReference type="Rhea" id="RHEA:61294"/>
    </physiologicalReaction>
</comment>
<comment type="catalytic activity">
    <reaction evidence="2">
        <text>(R)-pantoate + NADP(+) = 2-dehydropantoate + NADPH + H(+)</text>
        <dbReference type="Rhea" id="RHEA:16233"/>
        <dbReference type="ChEBI" id="CHEBI:11561"/>
        <dbReference type="ChEBI" id="CHEBI:15378"/>
        <dbReference type="ChEBI" id="CHEBI:15980"/>
        <dbReference type="ChEBI" id="CHEBI:57783"/>
        <dbReference type="ChEBI" id="CHEBI:58349"/>
        <dbReference type="EC" id="1.1.1.169"/>
    </reaction>
    <physiologicalReaction direction="right-to-left" evidence="2">
        <dbReference type="Rhea" id="RHEA:16235"/>
    </physiologicalReaction>
</comment>
<comment type="pathway">
    <text evidence="2">Cofactor biosynthesis; coenzyme A biosynthesis.</text>
</comment>
<comment type="subcellular location">
    <subcellularLocation>
        <location evidence="2">Cytoplasm</location>
    </subcellularLocation>
</comment>
<comment type="similarity">
    <text evidence="3">Belongs to the ketopantoate reductase family.</text>
</comment>
<keyword id="KW-0173">Coenzyme A biosynthesis</keyword>
<keyword id="KW-0963">Cytoplasm</keyword>
<keyword id="KW-0520">NAD</keyword>
<keyword id="KW-0521">NADP</keyword>
<keyword id="KW-0560">Oxidoreductase</keyword>
<keyword id="KW-1185">Reference proteome</keyword>
<feature type="chain" id="PRO_0000157324" description="2-dehydropantoate 2-reductase">
    <location>
        <begin position="1"/>
        <end position="279"/>
    </location>
</feature>
<feature type="active site" description="Proton donor" evidence="1">
    <location>
        <position position="158"/>
    </location>
</feature>
<feature type="binding site" evidence="2">
    <location>
        <begin position="6"/>
        <end position="11"/>
    </location>
    <ligand>
        <name>NADP(+)</name>
        <dbReference type="ChEBI" id="CHEBI:58349"/>
    </ligand>
</feature>
<feature type="binding site" evidence="2">
    <location>
        <position position="66"/>
    </location>
    <ligand>
        <name>NADP(+)</name>
        <dbReference type="ChEBI" id="CHEBI:58349"/>
    </ligand>
</feature>
<feature type="binding site" evidence="2">
    <location>
        <position position="86"/>
    </location>
    <ligand>
        <name>NADP(+)</name>
        <dbReference type="ChEBI" id="CHEBI:58349"/>
    </ligand>
</feature>
<feature type="binding site" evidence="2">
    <location>
        <position position="158"/>
    </location>
    <ligand>
        <name>substrate</name>
    </ligand>
</feature>
<feature type="binding site" evidence="2">
    <location>
        <position position="162"/>
    </location>
    <ligand>
        <name>substrate</name>
    </ligand>
</feature>
<feature type="binding site" evidence="2">
    <location>
        <position position="166"/>
    </location>
    <ligand>
        <name>substrate</name>
    </ligand>
</feature>
<feature type="binding site" evidence="2">
    <location>
        <position position="176"/>
    </location>
    <ligand>
        <name>substrate</name>
    </ligand>
</feature>
<feature type="binding site" evidence="2">
    <location>
        <begin position="225"/>
        <end position="228"/>
    </location>
    <ligand>
        <name>substrate</name>
    </ligand>
</feature>
<feature type="binding site" evidence="2">
    <location>
        <position position="240"/>
    </location>
    <ligand>
        <name>NADP(+)</name>
        <dbReference type="ChEBI" id="CHEBI:58349"/>
    </ligand>
</feature>
<organism>
    <name type="scientific">Pyrobaculum aerophilum (strain ATCC 51768 / DSM 7523 / JCM 9630 / CIP 104966 / NBRC 100827 / IM2)</name>
    <dbReference type="NCBI Taxonomy" id="178306"/>
    <lineage>
        <taxon>Archaea</taxon>
        <taxon>Thermoproteota</taxon>
        <taxon>Thermoprotei</taxon>
        <taxon>Thermoproteales</taxon>
        <taxon>Thermoproteaceae</taxon>
        <taxon>Pyrobaculum</taxon>
    </lineage>
</organism>
<accession>Q8ZT70</accession>
<gene>
    <name type="ordered locus">PAE3409</name>
</gene>
<dbReference type="EC" id="1.1.1.169" evidence="2"/>
<dbReference type="EMBL" id="AE009441">
    <property type="protein sequence ID" value="AAL64893.1"/>
    <property type="molecule type" value="Genomic_DNA"/>
</dbReference>
<dbReference type="RefSeq" id="WP_011009360.1">
    <property type="nucleotide sequence ID" value="NC_003364.1"/>
</dbReference>
<dbReference type="SMR" id="Q8ZT70"/>
<dbReference type="STRING" id="178306.PAE3409"/>
<dbReference type="EnsemblBacteria" id="AAL64893">
    <property type="protein sequence ID" value="AAL64893"/>
    <property type="gene ID" value="PAE3409"/>
</dbReference>
<dbReference type="GeneID" id="1464088"/>
<dbReference type="KEGG" id="pai:PAE3409"/>
<dbReference type="PATRIC" id="fig|178306.9.peg.2562"/>
<dbReference type="eggNOG" id="arCOG04139">
    <property type="taxonomic scope" value="Archaea"/>
</dbReference>
<dbReference type="HOGENOM" id="CLU_031468_0_0_2"/>
<dbReference type="InParanoid" id="Q8ZT70"/>
<dbReference type="UniPathway" id="UPA00241"/>
<dbReference type="Proteomes" id="UP000002439">
    <property type="component" value="Chromosome"/>
</dbReference>
<dbReference type="GO" id="GO:0005737">
    <property type="term" value="C:cytoplasm"/>
    <property type="evidence" value="ECO:0000318"/>
    <property type="project" value="GO_Central"/>
</dbReference>
<dbReference type="GO" id="GO:0008677">
    <property type="term" value="F:2-dehydropantoate 2-reductase activity"/>
    <property type="evidence" value="ECO:0000318"/>
    <property type="project" value="GO_Central"/>
</dbReference>
<dbReference type="GO" id="GO:0050661">
    <property type="term" value="F:NADP binding"/>
    <property type="evidence" value="ECO:0000318"/>
    <property type="project" value="GO_Central"/>
</dbReference>
<dbReference type="GO" id="GO:0015937">
    <property type="term" value="P:coenzyme A biosynthetic process"/>
    <property type="evidence" value="ECO:0007669"/>
    <property type="project" value="UniProtKB-UniPathway"/>
</dbReference>
<dbReference type="GO" id="GO:0015940">
    <property type="term" value="P:pantothenate biosynthetic process"/>
    <property type="evidence" value="ECO:0007669"/>
    <property type="project" value="InterPro"/>
</dbReference>
<dbReference type="FunFam" id="1.10.1040.10:FF:000017">
    <property type="entry name" value="2-dehydropantoate 2-reductase"/>
    <property type="match status" value="1"/>
</dbReference>
<dbReference type="Gene3D" id="1.10.1040.10">
    <property type="entry name" value="N-(1-d-carboxylethyl)-l-norvaline Dehydrogenase, domain 2"/>
    <property type="match status" value="1"/>
</dbReference>
<dbReference type="Gene3D" id="3.40.50.720">
    <property type="entry name" value="NAD(P)-binding Rossmann-like Domain"/>
    <property type="match status" value="1"/>
</dbReference>
<dbReference type="InterPro" id="IPR008927">
    <property type="entry name" value="6-PGluconate_DH-like_C_sf"/>
</dbReference>
<dbReference type="InterPro" id="IPR013328">
    <property type="entry name" value="6PGD_dom2"/>
</dbReference>
<dbReference type="InterPro" id="IPR003710">
    <property type="entry name" value="ApbA"/>
</dbReference>
<dbReference type="InterPro" id="IPR050838">
    <property type="entry name" value="Ketopantoate_reductase"/>
</dbReference>
<dbReference type="InterPro" id="IPR013752">
    <property type="entry name" value="KPA_reductase"/>
</dbReference>
<dbReference type="InterPro" id="IPR013332">
    <property type="entry name" value="KPR_N"/>
</dbReference>
<dbReference type="InterPro" id="IPR036291">
    <property type="entry name" value="NAD(P)-bd_dom_sf"/>
</dbReference>
<dbReference type="NCBIfam" id="TIGR00745">
    <property type="entry name" value="apbA_panE"/>
    <property type="match status" value="1"/>
</dbReference>
<dbReference type="PANTHER" id="PTHR43765:SF2">
    <property type="entry name" value="2-DEHYDROPANTOATE 2-REDUCTASE"/>
    <property type="match status" value="1"/>
</dbReference>
<dbReference type="PANTHER" id="PTHR43765">
    <property type="entry name" value="2-DEHYDROPANTOATE 2-REDUCTASE-RELATED"/>
    <property type="match status" value="1"/>
</dbReference>
<dbReference type="Pfam" id="PF02558">
    <property type="entry name" value="ApbA"/>
    <property type="match status" value="1"/>
</dbReference>
<dbReference type="Pfam" id="PF08546">
    <property type="entry name" value="ApbA_C"/>
    <property type="match status" value="1"/>
</dbReference>
<dbReference type="SUPFAM" id="SSF48179">
    <property type="entry name" value="6-phosphogluconate dehydrogenase C-terminal domain-like"/>
    <property type="match status" value="1"/>
</dbReference>
<dbReference type="SUPFAM" id="SSF51735">
    <property type="entry name" value="NAD(P)-binding Rossmann-fold domains"/>
    <property type="match status" value="1"/>
</dbReference>
<evidence type="ECO:0000250" key="1">
    <source>
        <dbReference type="UniProtKB" id="P0A9J4"/>
    </source>
</evidence>
<evidence type="ECO:0000250" key="2">
    <source>
        <dbReference type="UniProtKB" id="Q5JGC2"/>
    </source>
</evidence>
<evidence type="ECO:0000305" key="3"/>
<reference key="1">
    <citation type="journal article" date="2002" name="Proc. Natl. Acad. Sci. U.S.A.">
        <title>Genome sequence of the hyperthermophilic crenarchaeon Pyrobaculum aerophilum.</title>
        <authorList>
            <person name="Fitz-Gibbon S.T."/>
            <person name="Ladner H."/>
            <person name="Kim U.-J."/>
            <person name="Stetter K.O."/>
            <person name="Simon M.I."/>
            <person name="Miller J.H."/>
        </authorList>
    </citation>
    <scope>NUCLEOTIDE SEQUENCE [LARGE SCALE GENOMIC DNA]</scope>
    <source>
        <strain>ATCC 51768 / DSM 7523 / JCM 9630 / CIP 104966 / NBRC 100827 / IM2</strain>
    </source>
</reference>
<proteinExistence type="inferred from homology"/>
<protein>
    <recommendedName>
        <fullName evidence="2">2-dehydropantoate 2-reductase</fullName>
        <ecNumber evidence="2">1.1.1.169</ecNumber>
    </recommendedName>
    <alternativeName>
        <fullName evidence="2">Ketopantoate reductase</fullName>
        <shortName evidence="2">KPR</shortName>
    </alternativeName>
</protein>
<sequence length="279" mass="29732">MLRVIGLGAVGSLFTYFLNRAGVVPEVVQRRRCGEFLFCVEGDCEKLKFREGGAADDVGYTIVAVKAYDSRSVVPHLKGVAVVAQNGIGGYEEIKEAYPNSVPAVVTYGVYREGCRAELRGVGEIYLPSAVSTLAELLERGGGRVRLVEDIEPYRWLKLAVNAAINAITALLQAPNGVIISSPYAQTLALEVAQEVLNVATALGVKMPRNPVEEVLRVASATAKNLSSTARDVAACAKTEIDYINGAVVKYGEALGVATPVNKALFNLIKARESLCNSG</sequence>